<comment type="function">
    <text evidence="1">Accelerates the degradation of transcripts by removing pyrophosphate from the 5'-end of triphosphorylated RNA, leading to a more labile monophosphorylated state that can stimulate subsequent ribonuclease cleavage.</text>
</comment>
<comment type="cofactor">
    <cofactor evidence="1">
        <name>a divalent metal cation</name>
        <dbReference type="ChEBI" id="CHEBI:60240"/>
    </cofactor>
</comment>
<comment type="similarity">
    <text evidence="1">Belongs to the Nudix hydrolase family. RppH subfamily.</text>
</comment>
<name>RPPH_ALIFM</name>
<sequence length="170" mass="20377">MIDGDGFRPNVGIVICNSHGQVFWAKRYGQHSWQFPQGGIDDGETPEQAMYRELYEEVGLTKNDVRILASSRHWLRYKLPKRLVRWDSKPVCIGQKQKWFLLRLECDESKVNMQRDRSPEFDGWRWVSYWYPVRQVVSFKRDVYRRALKEFAVIAMPFKERKFKRKGKKG</sequence>
<keyword id="KW-0378">Hydrolase</keyword>
<protein>
    <recommendedName>
        <fullName evidence="1">RNA pyrophosphohydrolase</fullName>
        <ecNumber evidence="1">3.6.1.-</ecNumber>
    </recommendedName>
    <alternativeName>
        <fullName evidence="1">(Di)nucleoside polyphosphate hydrolase</fullName>
    </alternativeName>
</protein>
<accession>B5F9U8</accession>
<proteinExistence type="inferred from homology"/>
<evidence type="ECO:0000255" key="1">
    <source>
        <dbReference type="HAMAP-Rule" id="MF_00298"/>
    </source>
</evidence>
<dbReference type="EC" id="3.6.1.-" evidence="1"/>
<dbReference type="EMBL" id="CP001139">
    <property type="protein sequence ID" value="ACH66772.1"/>
    <property type="molecule type" value="Genomic_DNA"/>
</dbReference>
<dbReference type="RefSeq" id="WP_005417607.1">
    <property type="nucleotide sequence ID" value="NC_011184.1"/>
</dbReference>
<dbReference type="SMR" id="B5F9U8"/>
<dbReference type="GeneID" id="54163092"/>
<dbReference type="KEGG" id="vfm:VFMJ11_0455"/>
<dbReference type="HOGENOM" id="CLU_087195_3_2_6"/>
<dbReference type="Proteomes" id="UP000001857">
    <property type="component" value="Chromosome I"/>
</dbReference>
<dbReference type="GO" id="GO:0005737">
    <property type="term" value="C:cytoplasm"/>
    <property type="evidence" value="ECO:0007669"/>
    <property type="project" value="TreeGrafter"/>
</dbReference>
<dbReference type="GO" id="GO:0034353">
    <property type="term" value="F:mRNA 5'-diphosphatase activity"/>
    <property type="evidence" value="ECO:0007669"/>
    <property type="project" value="TreeGrafter"/>
</dbReference>
<dbReference type="GO" id="GO:0006402">
    <property type="term" value="P:mRNA catabolic process"/>
    <property type="evidence" value="ECO:0007669"/>
    <property type="project" value="TreeGrafter"/>
</dbReference>
<dbReference type="CDD" id="cd03671">
    <property type="entry name" value="NUDIX_Ap4A_hydrolase_plant_like"/>
    <property type="match status" value="1"/>
</dbReference>
<dbReference type="FunFam" id="3.90.79.10:FF:000001">
    <property type="entry name" value="RNA pyrophosphohydrolase"/>
    <property type="match status" value="1"/>
</dbReference>
<dbReference type="Gene3D" id="3.90.79.10">
    <property type="entry name" value="Nucleoside Triphosphate Pyrophosphohydrolase"/>
    <property type="match status" value="1"/>
</dbReference>
<dbReference type="HAMAP" id="MF_00298">
    <property type="entry name" value="Nudix_RppH"/>
    <property type="match status" value="1"/>
</dbReference>
<dbReference type="InterPro" id="IPR020476">
    <property type="entry name" value="Nudix_hydrolase"/>
</dbReference>
<dbReference type="InterPro" id="IPR015797">
    <property type="entry name" value="NUDIX_hydrolase-like_dom_sf"/>
</dbReference>
<dbReference type="InterPro" id="IPR020084">
    <property type="entry name" value="NUDIX_hydrolase_CS"/>
</dbReference>
<dbReference type="InterPro" id="IPR000086">
    <property type="entry name" value="NUDIX_hydrolase_dom"/>
</dbReference>
<dbReference type="InterPro" id="IPR022927">
    <property type="entry name" value="RppH"/>
</dbReference>
<dbReference type="NCBIfam" id="NF001934">
    <property type="entry name" value="PRK00714.1-1"/>
    <property type="match status" value="1"/>
</dbReference>
<dbReference type="NCBIfam" id="NF001936">
    <property type="entry name" value="PRK00714.1-3"/>
    <property type="match status" value="1"/>
</dbReference>
<dbReference type="NCBIfam" id="NF001937">
    <property type="entry name" value="PRK00714.1-4"/>
    <property type="match status" value="1"/>
</dbReference>
<dbReference type="NCBIfam" id="NF001938">
    <property type="entry name" value="PRK00714.1-5"/>
    <property type="match status" value="1"/>
</dbReference>
<dbReference type="PANTHER" id="PTHR23114">
    <property type="entry name" value="M7GPPPN-MRNA HYDROLASE"/>
    <property type="match status" value="1"/>
</dbReference>
<dbReference type="PANTHER" id="PTHR23114:SF17">
    <property type="entry name" value="M7GPPPN-MRNA HYDROLASE"/>
    <property type="match status" value="1"/>
</dbReference>
<dbReference type="Pfam" id="PF00293">
    <property type="entry name" value="NUDIX"/>
    <property type="match status" value="1"/>
</dbReference>
<dbReference type="PRINTS" id="PR00502">
    <property type="entry name" value="NUDIXFAMILY"/>
</dbReference>
<dbReference type="SUPFAM" id="SSF55811">
    <property type="entry name" value="Nudix"/>
    <property type="match status" value="1"/>
</dbReference>
<dbReference type="PROSITE" id="PS51462">
    <property type="entry name" value="NUDIX"/>
    <property type="match status" value="1"/>
</dbReference>
<dbReference type="PROSITE" id="PS00893">
    <property type="entry name" value="NUDIX_BOX"/>
    <property type="match status" value="1"/>
</dbReference>
<organism>
    <name type="scientific">Aliivibrio fischeri (strain MJ11)</name>
    <name type="common">Vibrio fischeri</name>
    <dbReference type="NCBI Taxonomy" id="388396"/>
    <lineage>
        <taxon>Bacteria</taxon>
        <taxon>Pseudomonadati</taxon>
        <taxon>Pseudomonadota</taxon>
        <taxon>Gammaproteobacteria</taxon>
        <taxon>Vibrionales</taxon>
        <taxon>Vibrionaceae</taxon>
        <taxon>Aliivibrio</taxon>
    </lineage>
</organism>
<gene>
    <name evidence="1" type="primary">rppH</name>
    <name evidence="1" type="synonym">nudH</name>
    <name type="ordered locus">VFMJ11_0455</name>
</gene>
<feature type="chain" id="PRO_1000115303" description="RNA pyrophosphohydrolase">
    <location>
        <begin position="1"/>
        <end position="170"/>
    </location>
</feature>
<feature type="domain" description="Nudix hydrolase" evidence="1">
    <location>
        <begin position="6"/>
        <end position="149"/>
    </location>
</feature>
<feature type="short sequence motif" description="Nudix box">
    <location>
        <begin position="38"/>
        <end position="59"/>
    </location>
</feature>
<reference key="1">
    <citation type="submission" date="2008-08" db="EMBL/GenBank/DDBJ databases">
        <title>Complete sequence of Vibrio fischeri strain MJ11.</title>
        <authorList>
            <person name="Mandel M.J."/>
            <person name="Stabb E.V."/>
            <person name="Ruby E.G."/>
            <person name="Ferriera S."/>
            <person name="Johnson J."/>
            <person name="Kravitz S."/>
            <person name="Beeson K."/>
            <person name="Sutton G."/>
            <person name="Rogers Y.-H."/>
            <person name="Friedman R."/>
            <person name="Frazier M."/>
            <person name="Venter J.C."/>
        </authorList>
    </citation>
    <scope>NUCLEOTIDE SEQUENCE [LARGE SCALE GENOMIC DNA]</scope>
    <source>
        <strain>MJ11</strain>
    </source>
</reference>